<accession>B8GWZ0</accession>
<name>PNP_CAUVN</name>
<organism>
    <name type="scientific">Caulobacter vibrioides (strain NA1000 / CB15N)</name>
    <name type="common">Caulobacter crescentus</name>
    <dbReference type="NCBI Taxonomy" id="565050"/>
    <lineage>
        <taxon>Bacteria</taxon>
        <taxon>Pseudomonadati</taxon>
        <taxon>Pseudomonadota</taxon>
        <taxon>Alphaproteobacteria</taxon>
        <taxon>Caulobacterales</taxon>
        <taxon>Caulobacteraceae</taxon>
        <taxon>Caulobacter</taxon>
    </lineage>
</organism>
<protein>
    <recommendedName>
        <fullName evidence="1">Polyribonucleotide nucleotidyltransferase</fullName>
        <ecNumber evidence="1">2.7.7.8</ecNumber>
    </recommendedName>
    <alternativeName>
        <fullName evidence="1">Polynucleotide phosphorylase</fullName>
        <shortName evidence="1">PNPase</shortName>
    </alternativeName>
</protein>
<comment type="function">
    <text evidence="1">Involved in mRNA degradation. Catalyzes the phosphorolysis of single-stranded polyribonucleotides processively in the 3'- to 5'-direction.</text>
</comment>
<comment type="catalytic activity">
    <reaction evidence="1">
        <text>RNA(n+1) + phosphate = RNA(n) + a ribonucleoside 5'-diphosphate</text>
        <dbReference type="Rhea" id="RHEA:22096"/>
        <dbReference type="Rhea" id="RHEA-COMP:14527"/>
        <dbReference type="Rhea" id="RHEA-COMP:17342"/>
        <dbReference type="ChEBI" id="CHEBI:43474"/>
        <dbReference type="ChEBI" id="CHEBI:57930"/>
        <dbReference type="ChEBI" id="CHEBI:140395"/>
        <dbReference type="EC" id="2.7.7.8"/>
    </reaction>
</comment>
<comment type="cofactor">
    <cofactor evidence="1">
        <name>Mg(2+)</name>
        <dbReference type="ChEBI" id="CHEBI:18420"/>
    </cofactor>
</comment>
<comment type="subcellular location">
    <subcellularLocation>
        <location evidence="1">Cytoplasm</location>
    </subcellularLocation>
</comment>
<comment type="similarity">
    <text evidence="1">Belongs to the polyribonucleotide nucleotidyltransferase family.</text>
</comment>
<sequence length="712" mass="76448">MFDIKRKTIEWGGKTLVLETGRIARQADGAVLATMGETVVLATAVFAKSQKPGQDFFPLTVNYQEKTFAAGKIPGGFFKREGRPSEKETLVSRLIDRPIRPLFVKGFKNEVQVVVTVLQHDLENDPDILGMVAASAALCLSGAPFMGPIGAARVGWVDGAYVLNPTLDEMKESKMDLVVAGTADAVMMVESEIQELSEEIVLGGVNFAHQQMQAVIDAIIDLAEHAAKEPFAFEPEDTDAIKAKMKDLVGADIAAAYKIQKKQDRYEAVGAAKKKAIAALGLSDENPTGYDPLKLGAIFKELEADVVRRGILDTGLRIDGRDVKTVRPILGEVGILPRTHGSALFTRGETQAIVVATLGTGDDEQFIDALEGTYKESFLLHYNFPPYSVGETGRMGSPGRREIGHGKLAWRALRPMLPTKEDFPYTIRLVSEITESNGSSSMATVCGSSLAMMDAGVPLVRPVSGIAMGLILEQDGFAVLSDILGDEDHLGDMDFKVAGTSEGLTSLQMDIKIAGITPAIMEQALAQAKEGRAHILGEMNKAMDAPRADVGDFAPKIETINIPTDKIREVIGSGGKVIREIVATTGAKVDINDDGVVKVSASDGAKIKAAIDWIKSITDEAEVGKIYDGKVVKVVDFGAFVNFFGAKDGLVHVSQISNERVAKPSDVLKEGQMVKVKLLGFDDRGKTKLSMKVVDQETGEDLSKKEAAAEEA</sequence>
<proteinExistence type="inferred from homology"/>
<feature type="chain" id="PRO_1000185728" description="Polyribonucleotide nucleotidyltransferase">
    <location>
        <begin position="1"/>
        <end position="712"/>
    </location>
</feature>
<feature type="domain" description="KH" evidence="1">
    <location>
        <begin position="555"/>
        <end position="614"/>
    </location>
</feature>
<feature type="domain" description="S1 motif" evidence="1">
    <location>
        <begin position="624"/>
        <end position="692"/>
    </location>
</feature>
<feature type="binding site" evidence="1">
    <location>
        <position position="488"/>
    </location>
    <ligand>
        <name>Mg(2+)</name>
        <dbReference type="ChEBI" id="CHEBI:18420"/>
    </ligand>
</feature>
<feature type="binding site" evidence="1">
    <location>
        <position position="494"/>
    </location>
    <ligand>
        <name>Mg(2+)</name>
        <dbReference type="ChEBI" id="CHEBI:18420"/>
    </ligand>
</feature>
<dbReference type="EC" id="2.7.7.8" evidence="1"/>
<dbReference type="EMBL" id="CP001340">
    <property type="protein sequence ID" value="ACL93500.1"/>
    <property type="molecule type" value="Genomic_DNA"/>
</dbReference>
<dbReference type="RefSeq" id="WP_010917924.1">
    <property type="nucleotide sequence ID" value="NC_011916.1"/>
</dbReference>
<dbReference type="RefSeq" id="YP_002515408.1">
    <property type="nucleotide sequence ID" value="NC_011916.1"/>
</dbReference>
<dbReference type="SMR" id="B8GWZ0"/>
<dbReference type="GeneID" id="7332123"/>
<dbReference type="KEGG" id="ccs:CCNA_00033"/>
<dbReference type="PATRIC" id="fig|565050.3.peg.34"/>
<dbReference type="HOGENOM" id="CLU_004217_2_2_5"/>
<dbReference type="OrthoDB" id="9804305at2"/>
<dbReference type="PhylomeDB" id="B8GWZ0"/>
<dbReference type="Proteomes" id="UP000001364">
    <property type="component" value="Chromosome"/>
</dbReference>
<dbReference type="GO" id="GO:0005829">
    <property type="term" value="C:cytosol"/>
    <property type="evidence" value="ECO:0007669"/>
    <property type="project" value="TreeGrafter"/>
</dbReference>
<dbReference type="GO" id="GO:0000175">
    <property type="term" value="F:3'-5'-RNA exonuclease activity"/>
    <property type="evidence" value="ECO:0007669"/>
    <property type="project" value="TreeGrafter"/>
</dbReference>
<dbReference type="GO" id="GO:0000287">
    <property type="term" value="F:magnesium ion binding"/>
    <property type="evidence" value="ECO:0007669"/>
    <property type="project" value="UniProtKB-UniRule"/>
</dbReference>
<dbReference type="GO" id="GO:0004654">
    <property type="term" value="F:polyribonucleotide nucleotidyltransferase activity"/>
    <property type="evidence" value="ECO:0007669"/>
    <property type="project" value="UniProtKB-UniRule"/>
</dbReference>
<dbReference type="GO" id="GO:0003723">
    <property type="term" value="F:RNA binding"/>
    <property type="evidence" value="ECO:0007669"/>
    <property type="project" value="UniProtKB-UniRule"/>
</dbReference>
<dbReference type="GO" id="GO:0006402">
    <property type="term" value="P:mRNA catabolic process"/>
    <property type="evidence" value="ECO:0007669"/>
    <property type="project" value="UniProtKB-UniRule"/>
</dbReference>
<dbReference type="GO" id="GO:0006396">
    <property type="term" value="P:RNA processing"/>
    <property type="evidence" value="ECO:0007669"/>
    <property type="project" value="InterPro"/>
</dbReference>
<dbReference type="CDD" id="cd02393">
    <property type="entry name" value="KH-I_PNPase"/>
    <property type="match status" value="1"/>
</dbReference>
<dbReference type="CDD" id="cd11363">
    <property type="entry name" value="RNase_PH_PNPase_1"/>
    <property type="match status" value="1"/>
</dbReference>
<dbReference type="CDD" id="cd11364">
    <property type="entry name" value="RNase_PH_PNPase_2"/>
    <property type="match status" value="1"/>
</dbReference>
<dbReference type="CDD" id="cd04472">
    <property type="entry name" value="S1_PNPase"/>
    <property type="match status" value="1"/>
</dbReference>
<dbReference type="FunFam" id="2.40.50.140:FF:000107">
    <property type="entry name" value="Polyribonucleotide nucleotidyltransferase"/>
    <property type="match status" value="1"/>
</dbReference>
<dbReference type="FunFam" id="3.30.1370.10:FF:000001">
    <property type="entry name" value="Polyribonucleotide nucleotidyltransferase"/>
    <property type="match status" value="1"/>
</dbReference>
<dbReference type="FunFam" id="3.30.230.70:FF:000001">
    <property type="entry name" value="Polyribonucleotide nucleotidyltransferase"/>
    <property type="match status" value="1"/>
</dbReference>
<dbReference type="FunFam" id="3.30.230.70:FF:000002">
    <property type="entry name" value="Polyribonucleotide nucleotidyltransferase"/>
    <property type="match status" value="1"/>
</dbReference>
<dbReference type="Gene3D" id="3.30.230.70">
    <property type="entry name" value="GHMP Kinase, N-terminal domain"/>
    <property type="match status" value="2"/>
</dbReference>
<dbReference type="Gene3D" id="3.30.1370.10">
    <property type="entry name" value="K Homology domain, type 1"/>
    <property type="match status" value="1"/>
</dbReference>
<dbReference type="Gene3D" id="2.40.50.140">
    <property type="entry name" value="Nucleic acid-binding proteins"/>
    <property type="match status" value="1"/>
</dbReference>
<dbReference type="HAMAP" id="MF_01595">
    <property type="entry name" value="PNPase"/>
    <property type="match status" value="1"/>
</dbReference>
<dbReference type="InterPro" id="IPR001247">
    <property type="entry name" value="ExoRNase_PH_dom1"/>
</dbReference>
<dbReference type="InterPro" id="IPR015847">
    <property type="entry name" value="ExoRNase_PH_dom2"/>
</dbReference>
<dbReference type="InterPro" id="IPR036345">
    <property type="entry name" value="ExoRNase_PH_dom2_sf"/>
</dbReference>
<dbReference type="InterPro" id="IPR004087">
    <property type="entry name" value="KH_dom"/>
</dbReference>
<dbReference type="InterPro" id="IPR004088">
    <property type="entry name" value="KH_dom_type_1"/>
</dbReference>
<dbReference type="InterPro" id="IPR036612">
    <property type="entry name" value="KH_dom_type_1_sf"/>
</dbReference>
<dbReference type="InterPro" id="IPR012340">
    <property type="entry name" value="NA-bd_OB-fold"/>
</dbReference>
<dbReference type="InterPro" id="IPR012162">
    <property type="entry name" value="PNPase"/>
</dbReference>
<dbReference type="InterPro" id="IPR027408">
    <property type="entry name" value="PNPase/RNase_PH_dom_sf"/>
</dbReference>
<dbReference type="InterPro" id="IPR015848">
    <property type="entry name" value="PNPase_PH_RNA-bd_bac/org-type"/>
</dbReference>
<dbReference type="InterPro" id="IPR036456">
    <property type="entry name" value="PNPase_PH_RNA-bd_sf"/>
</dbReference>
<dbReference type="InterPro" id="IPR020568">
    <property type="entry name" value="Ribosomal_Su5_D2-typ_SF"/>
</dbReference>
<dbReference type="InterPro" id="IPR003029">
    <property type="entry name" value="S1_domain"/>
</dbReference>
<dbReference type="NCBIfam" id="TIGR03591">
    <property type="entry name" value="polynuc_phos"/>
    <property type="match status" value="1"/>
</dbReference>
<dbReference type="NCBIfam" id="NF008805">
    <property type="entry name" value="PRK11824.1"/>
    <property type="match status" value="1"/>
</dbReference>
<dbReference type="PANTHER" id="PTHR11252">
    <property type="entry name" value="POLYRIBONUCLEOTIDE NUCLEOTIDYLTRANSFERASE"/>
    <property type="match status" value="1"/>
</dbReference>
<dbReference type="PANTHER" id="PTHR11252:SF0">
    <property type="entry name" value="POLYRIBONUCLEOTIDE NUCLEOTIDYLTRANSFERASE 1, MITOCHONDRIAL"/>
    <property type="match status" value="1"/>
</dbReference>
<dbReference type="Pfam" id="PF00013">
    <property type="entry name" value="KH_1"/>
    <property type="match status" value="1"/>
</dbReference>
<dbReference type="Pfam" id="PF03726">
    <property type="entry name" value="PNPase"/>
    <property type="match status" value="1"/>
</dbReference>
<dbReference type="Pfam" id="PF01138">
    <property type="entry name" value="RNase_PH"/>
    <property type="match status" value="2"/>
</dbReference>
<dbReference type="Pfam" id="PF03725">
    <property type="entry name" value="RNase_PH_C"/>
    <property type="match status" value="2"/>
</dbReference>
<dbReference type="Pfam" id="PF00575">
    <property type="entry name" value="S1"/>
    <property type="match status" value="1"/>
</dbReference>
<dbReference type="PIRSF" id="PIRSF005499">
    <property type="entry name" value="PNPase"/>
    <property type="match status" value="1"/>
</dbReference>
<dbReference type="SMART" id="SM00322">
    <property type="entry name" value="KH"/>
    <property type="match status" value="1"/>
</dbReference>
<dbReference type="SMART" id="SM00316">
    <property type="entry name" value="S1"/>
    <property type="match status" value="1"/>
</dbReference>
<dbReference type="SUPFAM" id="SSF54791">
    <property type="entry name" value="Eukaryotic type KH-domain (KH-domain type I)"/>
    <property type="match status" value="1"/>
</dbReference>
<dbReference type="SUPFAM" id="SSF50249">
    <property type="entry name" value="Nucleic acid-binding proteins"/>
    <property type="match status" value="1"/>
</dbReference>
<dbReference type="SUPFAM" id="SSF46915">
    <property type="entry name" value="Polynucleotide phosphorylase/guanosine pentaphosphate synthase (PNPase/GPSI), domain 3"/>
    <property type="match status" value="1"/>
</dbReference>
<dbReference type="SUPFAM" id="SSF55666">
    <property type="entry name" value="Ribonuclease PH domain 2-like"/>
    <property type="match status" value="2"/>
</dbReference>
<dbReference type="SUPFAM" id="SSF54211">
    <property type="entry name" value="Ribosomal protein S5 domain 2-like"/>
    <property type="match status" value="2"/>
</dbReference>
<dbReference type="PROSITE" id="PS50084">
    <property type="entry name" value="KH_TYPE_1"/>
    <property type="match status" value="1"/>
</dbReference>
<dbReference type="PROSITE" id="PS50126">
    <property type="entry name" value="S1"/>
    <property type="match status" value="1"/>
</dbReference>
<gene>
    <name evidence="1" type="primary">pnp</name>
    <name type="ordered locus">CCNA_00033</name>
</gene>
<reference key="1">
    <citation type="journal article" date="2010" name="J. Bacteriol.">
        <title>The genetic basis of laboratory adaptation in Caulobacter crescentus.</title>
        <authorList>
            <person name="Marks M.E."/>
            <person name="Castro-Rojas C.M."/>
            <person name="Teiling C."/>
            <person name="Du L."/>
            <person name="Kapatral V."/>
            <person name="Walunas T.L."/>
            <person name="Crosson S."/>
        </authorList>
    </citation>
    <scope>NUCLEOTIDE SEQUENCE [LARGE SCALE GENOMIC DNA]</scope>
    <source>
        <strain>NA1000 / CB15N</strain>
    </source>
</reference>
<evidence type="ECO:0000255" key="1">
    <source>
        <dbReference type="HAMAP-Rule" id="MF_01595"/>
    </source>
</evidence>
<keyword id="KW-0963">Cytoplasm</keyword>
<keyword id="KW-0460">Magnesium</keyword>
<keyword id="KW-0479">Metal-binding</keyword>
<keyword id="KW-0548">Nucleotidyltransferase</keyword>
<keyword id="KW-1185">Reference proteome</keyword>
<keyword id="KW-0694">RNA-binding</keyword>
<keyword id="KW-0808">Transferase</keyword>